<protein>
    <recommendedName>
        <fullName evidence="1">Bifunctional protein PyrR</fullName>
    </recommendedName>
    <domain>
        <recommendedName>
            <fullName evidence="1">Pyrimidine operon regulatory protein</fullName>
        </recommendedName>
    </domain>
    <domain>
        <recommendedName>
            <fullName evidence="1">Uracil phosphoribosyltransferase</fullName>
            <shortName evidence="1">UPRTase</shortName>
            <ecNumber evidence="1">2.4.2.9</ecNumber>
        </recommendedName>
    </domain>
</protein>
<reference key="1">
    <citation type="submission" date="2008-02" db="EMBL/GenBank/DDBJ databases">
        <title>Complete sequence of Synechococcus sp. PCC 7002.</title>
        <authorList>
            <person name="Li T."/>
            <person name="Zhao J."/>
            <person name="Zhao C."/>
            <person name="Liu Z."/>
            <person name="Zhao F."/>
            <person name="Marquardt J."/>
            <person name="Nomura C.T."/>
            <person name="Persson S."/>
            <person name="Detter J.C."/>
            <person name="Richardson P.M."/>
            <person name="Lanz C."/>
            <person name="Schuster S.C."/>
            <person name="Wang J."/>
            <person name="Li S."/>
            <person name="Huang X."/>
            <person name="Cai T."/>
            <person name="Yu Z."/>
            <person name="Luo J."/>
            <person name="Zhao J."/>
            <person name="Bryant D.A."/>
        </authorList>
    </citation>
    <scope>NUCLEOTIDE SEQUENCE [LARGE SCALE GENOMIC DNA]</scope>
    <source>
        <strain>ATCC 27264 / PCC 7002 / PR-6</strain>
    </source>
</reference>
<evidence type="ECO:0000255" key="1">
    <source>
        <dbReference type="HAMAP-Rule" id="MF_01219"/>
    </source>
</evidence>
<dbReference type="EC" id="2.4.2.9" evidence="1"/>
<dbReference type="EMBL" id="CP000951">
    <property type="protein sequence ID" value="ACA99681.1"/>
    <property type="molecule type" value="Genomic_DNA"/>
</dbReference>
<dbReference type="RefSeq" id="WP_012307304.1">
    <property type="nucleotide sequence ID" value="NZ_JAHHPU010000002.1"/>
</dbReference>
<dbReference type="SMR" id="B1XP88"/>
<dbReference type="STRING" id="32049.SYNPCC7002_A1692"/>
<dbReference type="KEGG" id="syp:SYNPCC7002_A1692"/>
<dbReference type="eggNOG" id="COG2065">
    <property type="taxonomic scope" value="Bacteria"/>
</dbReference>
<dbReference type="HOGENOM" id="CLU_094234_2_1_3"/>
<dbReference type="Proteomes" id="UP000001688">
    <property type="component" value="Chromosome"/>
</dbReference>
<dbReference type="GO" id="GO:0004845">
    <property type="term" value="F:uracil phosphoribosyltransferase activity"/>
    <property type="evidence" value="ECO:0007669"/>
    <property type="project" value="UniProtKB-UniRule"/>
</dbReference>
<dbReference type="GO" id="GO:0006355">
    <property type="term" value="P:regulation of DNA-templated transcription"/>
    <property type="evidence" value="ECO:0007669"/>
    <property type="project" value="UniProtKB-UniRule"/>
</dbReference>
<dbReference type="CDD" id="cd06223">
    <property type="entry name" value="PRTases_typeI"/>
    <property type="match status" value="1"/>
</dbReference>
<dbReference type="FunFam" id="3.40.50.2020:FF:000020">
    <property type="entry name" value="Bifunctional protein PyrR"/>
    <property type="match status" value="1"/>
</dbReference>
<dbReference type="Gene3D" id="3.40.50.2020">
    <property type="match status" value="1"/>
</dbReference>
<dbReference type="HAMAP" id="MF_01219">
    <property type="entry name" value="PyrR"/>
    <property type="match status" value="1"/>
</dbReference>
<dbReference type="InterPro" id="IPR000836">
    <property type="entry name" value="PRibTrfase_dom"/>
</dbReference>
<dbReference type="InterPro" id="IPR029057">
    <property type="entry name" value="PRTase-like"/>
</dbReference>
<dbReference type="InterPro" id="IPR023050">
    <property type="entry name" value="PyrR"/>
</dbReference>
<dbReference type="InterPro" id="IPR050137">
    <property type="entry name" value="PyrR_bifunctional"/>
</dbReference>
<dbReference type="NCBIfam" id="NF003545">
    <property type="entry name" value="PRK05205.1-1"/>
    <property type="match status" value="1"/>
</dbReference>
<dbReference type="NCBIfam" id="NF003549">
    <property type="entry name" value="PRK05205.1-5"/>
    <property type="match status" value="1"/>
</dbReference>
<dbReference type="PANTHER" id="PTHR11608">
    <property type="entry name" value="BIFUNCTIONAL PROTEIN PYRR"/>
    <property type="match status" value="1"/>
</dbReference>
<dbReference type="PANTHER" id="PTHR11608:SF0">
    <property type="entry name" value="BIFUNCTIONAL PROTEIN PYRR"/>
    <property type="match status" value="1"/>
</dbReference>
<dbReference type="Pfam" id="PF00156">
    <property type="entry name" value="Pribosyltran"/>
    <property type="match status" value="1"/>
</dbReference>
<dbReference type="SUPFAM" id="SSF53271">
    <property type="entry name" value="PRTase-like"/>
    <property type="match status" value="1"/>
</dbReference>
<organism>
    <name type="scientific">Picosynechococcus sp. (strain ATCC 27264 / PCC 7002 / PR-6)</name>
    <name type="common">Agmenellum quadruplicatum</name>
    <dbReference type="NCBI Taxonomy" id="32049"/>
    <lineage>
        <taxon>Bacteria</taxon>
        <taxon>Bacillati</taxon>
        <taxon>Cyanobacteriota</taxon>
        <taxon>Cyanophyceae</taxon>
        <taxon>Oscillatoriophycideae</taxon>
        <taxon>Chroococcales</taxon>
        <taxon>Geminocystaceae</taxon>
        <taxon>Picosynechococcus</taxon>
    </lineage>
</organism>
<keyword id="KW-0328">Glycosyltransferase</keyword>
<keyword id="KW-1185">Reference proteome</keyword>
<keyword id="KW-0804">Transcription</keyword>
<keyword id="KW-0805">Transcription regulation</keyword>
<keyword id="KW-0808">Transferase</keyword>
<feature type="chain" id="PRO_1000139213" description="Bifunctional protein PyrR">
    <location>
        <begin position="1"/>
        <end position="177"/>
    </location>
</feature>
<feature type="short sequence motif" description="PRPP-binding" evidence="1">
    <location>
        <begin position="99"/>
        <end position="111"/>
    </location>
</feature>
<sequence>MTKSVIEILSAEEMRRTITRLASQIVEKAGDLTDLALLGIHTRGVPLAENIAKQIETLEGIAVPVGALDITFYRDDLDQIRVRTPSKTDIPFDLNGKNLVLIDDVIYKGRTIRAALNAVNDYGRPEVIRLAVLVDRGHRQLPIQPDFTGKKLPTAKEEKVKVYLQDLDGRDAVELIK</sequence>
<comment type="function">
    <text evidence="1">Regulates the transcription of the pyrimidine nucleotide (pyr) operon in response to exogenous pyrimidines.</text>
</comment>
<comment type="function">
    <text evidence="1">Also displays a weak uracil phosphoribosyltransferase activity which is not physiologically significant.</text>
</comment>
<comment type="catalytic activity">
    <reaction evidence="1">
        <text>UMP + diphosphate = 5-phospho-alpha-D-ribose 1-diphosphate + uracil</text>
        <dbReference type="Rhea" id="RHEA:13017"/>
        <dbReference type="ChEBI" id="CHEBI:17568"/>
        <dbReference type="ChEBI" id="CHEBI:33019"/>
        <dbReference type="ChEBI" id="CHEBI:57865"/>
        <dbReference type="ChEBI" id="CHEBI:58017"/>
        <dbReference type="EC" id="2.4.2.9"/>
    </reaction>
</comment>
<comment type="similarity">
    <text evidence="1">Belongs to the purine/pyrimidine phosphoribosyltransferase family. PyrR subfamily.</text>
</comment>
<accession>B1XP88</accession>
<name>PYRR_PICP2</name>
<proteinExistence type="inferred from homology"/>
<gene>
    <name evidence="1" type="primary">pyrR</name>
    <name type="ordered locus">SYNPCC7002_A1692</name>
</gene>